<dbReference type="EMBL" id="CP000395">
    <property type="protein sequence ID" value="ABH01759.1"/>
    <property type="molecule type" value="Genomic_DNA"/>
</dbReference>
<dbReference type="EMBL" id="CP002933">
    <property type="protein sequence ID" value="AEL69713.1"/>
    <property type="molecule type" value="Genomic_DNA"/>
</dbReference>
<dbReference type="RefSeq" id="WP_004789515.1">
    <property type="nucleotide sequence ID" value="NZ_CP160066.1"/>
</dbReference>
<dbReference type="SMR" id="Q0SN19"/>
<dbReference type="STRING" id="29518.BLA32_01820"/>
<dbReference type="GeneID" id="83865963"/>
<dbReference type="KEGG" id="baf:BAPKO_0516"/>
<dbReference type="KEGG" id="bafz:BafPKo_0505"/>
<dbReference type="PATRIC" id="fig|390236.22.peg.485"/>
<dbReference type="eggNOG" id="COG0093">
    <property type="taxonomic scope" value="Bacteria"/>
</dbReference>
<dbReference type="HOGENOM" id="CLU_095071_2_1_12"/>
<dbReference type="OrthoDB" id="9806379at2"/>
<dbReference type="Proteomes" id="UP000005216">
    <property type="component" value="Chromosome"/>
</dbReference>
<dbReference type="GO" id="GO:0022625">
    <property type="term" value="C:cytosolic large ribosomal subunit"/>
    <property type="evidence" value="ECO:0007669"/>
    <property type="project" value="TreeGrafter"/>
</dbReference>
<dbReference type="GO" id="GO:0070180">
    <property type="term" value="F:large ribosomal subunit rRNA binding"/>
    <property type="evidence" value="ECO:0007669"/>
    <property type="project" value="TreeGrafter"/>
</dbReference>
<dbReference type="GO" id="GO:0003735">
    <property type="term" value="F:structural constituent of ribosome"/>
    <property type="evidence" value="ECO:0007669"/>
    <property type="project" value="InterPro"/>
</dbReference>
<dbReference type="GO" id="GO:0006412">
    <property type="term" value="P:translation"/>
    <property type="evidence" value="ECO:0007669"/>
    <property type="project" value="UniProtKB-UniRule"/>
</dbReference>
<dbReference type="CDD" id="cd00337">
    <property type="entry name" value="Ribosomal_uL14"/>
    <property type="match status" value="1"/>
</dbReference>
<dbReference type="FunFam" id="2.40.150.20:FF:000001">
    <property type="entry name" value="50S ribosomal protein L14"/>
    <property type="match status" value="1"/>
</dbReference>
<dbReference type="Gene3D" id="2.40.150.20">
    <property type="entry name" value="Ribosomal protein L14"/>
    <property type="match status" value="1"/>
</dbReference>
<dbReference type="HAMAP" id="MF_01367">
    <property type="entry name" value="Ribosomal_uL14"/>
    <property type="match status" value="1"/>
</dbReference>
<dbReference type="InterPro" id="IPR000218">
    <property type="entry name" value="Ribosomal_uL14"/>
</dbReference>
<dbReference type="InterPro" id="IPR005745">
    <property type="entry name" value="Ribosomal_uL14_bac-type"/>
</dbReference>
<dbReference type="InterPro" id="IPR019972">
    <property type="entry name" value="Ribosomal_uL14_CS"/>
</dbReference>
<dbReference type="InterPro" id="IPR036853">
    <property type="entry name" value="Ribosomal_uL14_sf"/>
</dbReference>
<dbReference type="NCBIfam" id="TIGR01067">
    <property type="entry name" value="rplN_bact"/>
    <property type="match status" value="1"/>
</dbReference>
<dbReference type="PANTHER" id="PTHR11761">
    <property type="entry name" value="50S/60S RIBOSOMAL PROTEIN L14/L23"/>
    <property type="match status" value="1"/>
</dbReference>
<dbReference type="PANTHER" id="PTHR11761:SF3">
    <property type="entry name" value="LARGE RIBOSOMAL SUBUNIT PROTEIN UL14M"/>
    <property type="match status" value="1"/>
</dbReference>
<dbReference type="Pfam" id="PF00238">
    <property type="entry name" value="Ribosomal_L14"/>
    <property type="match status" value="1"/>
</dbReference>
<dbReference type="SMART" id="SM01374">
    <property type="entry name" value="Ribosomal_L14"/>
    <property type="match status" value="1"/>
</dbReference>
<dbReference type="SUPFAM" id="SSF50193">
    <property type="entry name" value="Ribosomal protein L14"/>
    <property type="match status" value="1"/>
</dbReference>
<dbReference type="PROSITE" id="PS00049">
    <property type="entry name" value="RIBOSOMAL_L14"/>
    <property type="match status" value="1"/>
</dbReference>
<reference key="1">
    <citation type="journal article" date="2006" name="BMC Genomics">
        <title>Comparative genome analysis: selection pressure on the Borrelia vls cassettes is essential for infectivity.</title>
        <authorList>
            <person name="Gloeckner G."/>
            <person name="Schulte-Spechtel U."/>
            <person name="Schilhabel M."/>
            <person name="Felder M."/>
            <person name="Suehnel J."/>
            <person name="Wilske B."/>
            <person name="Platzer M."/>
        </authorList>
    </citation>
    <scope>NUCLEOTIDE SEQUENCE [LARGE SCALE GENOMIC DNA]</scope>
    <source>
        <strain>PKo</strain>
    </source>
</reference>
<reference key="2">
    <citation type="journal article" date="2011" name="J. Bacteriol.">
        <title>Whole-genome sequences of two Borrelia afzelii and two Borrelia garinii Lyme disease agent isolates.</title>
        <authorList>
            <person name="Casjens S.R."/>
            <person name="Mongodin E.F."/>
            <person name="Qiu W.G."/>
            <person name="Dunn J.J."/>
            <person name="Luft B.J."/>
            <person name="Fraser-Liggett C.M."/>
            <person name="Schutzer S.E."/>
        </authorList>
    </citation>
    <scope>NUCLEOTIDE SEQUENCE [LARGE SCALE GENOMIC DNA]</scope>
    <source>
        <strain>PKo</strain>
    </source>
</reference>
<feature type="chain" id="PRO_0000266453" description="Large ribosomal subunit protein uL14">
    <location>
        <begin position="1"/>
        <end position="122"/>
    </location>
</feature>
<accession>Q0SN19</accession>
<accession>G0ISD2</accession>
<sequence length="122" mass="13384">MIQMQTYLTIADNTGGKVAQCIKVLGGSKRRYAKIGDIITIVVKQAIPNSSVKKGDVCKAVIVRTSKEVRRKNGTYVRFDDNACVILDANLSPRGKRVFGPVARELRDANFMKVVSLASEVI</sequence>
<protein>
    <recommendedName>
        <fullName evidence="1">Large ribosomal subunit protein uL14</fullName>
    </recommendedName>
    <alternativeName>
        <fullName evidence="2">50S ribosomal protein L14</fullName>
    </alternativeName>
</protein>
<organism>
    <name type="scientific">Borreliella afzelii (strain PKo)</name>
    <name type="common">Borrelia afzelii</name>
    <dbReference type="NCBI Taxonomy" id="390236"/>
    <lineage>
        <taxon>Bacteria</taxon>
        <taxon>Pseudomonadati</taxon>
        <taxon>Spirochaetota</taxon>
        <taxon>Spirochaetia</taxon>
        <taxon>Spirochaetales</taxon>
        <taxon>Borreliaceae</taxon>
        <taxon>Borreliella</taxon>
    </lineage>
</organism>
<comment type="function">
    <text evidence="1">Binds to 23S rRNA. Forms part of two intersubunit bridges in the 70S ribosome.</text>
</comment>
<comment type="subunit">
    <text evidence="1">Part of the 50S ribosomal subunit. Forms a cluster with proteins L3 and L19. In the 70S ribosome, L14 and L19 interact and together make contacts with the 16S rRNA in bridges B5 and B8.</text>
</comment>
<comment type="similarity">
    <text evidence="1">Belongs to the universal ribosomal protein uL14 family.</text>
</comment>
<gene>
    <name evidence="1" type="primary">rplN</name>
    <name type="ordered locus">BAPKO_0516</name>
    <name type="ordered locus">BafPKo_0505</name>
</gene>
<name>RL14_BORAP</name>
<proteinExistence type="inferred from homology"/>
<keyword id="KW-0687">Ribonucleoprotein</keyword>
<keyword id="KW-0689">Ribosomal protein</keyword>
<keyword id="KW-0694">RNA-binding</keyword>
<keyword id="KW-0699">rRNA-binding</keyword>
<evidence type="ECO:0000255" key="1">
    <source>
        <dbReference type="HAMAP-Rule" id="MF_01367"/>
    </source>
</evidence>
<evidence type="ECO:0000305" key="2"/>